<name>DDL_PROMP</name>
<keyword id="KW-0067">ATP-binding</keyword>
<keyword id="KW-0133">Cell shape</keyword>
<keyword id="KW-0961">Cell wall biogenesis/degradation</keyword>
<keyword id="KW-0963">Cytoplasm</keyword>
<keyword id="KW-0436">Ligase</keyword>
<keyword id="KW-0460">Magnesium</keyword>
<keyword id="KW-0464">Manganese</keyword>
<keyword id="KW-0479">Metal-binding</keyword>
<keyword id="KW-0547">Nucleotide-binding</keyword>
<keyword id="KW-0573">Peptidoglycan synthesis</keyword>
<sequence length="355" mass="39975">MLEKEKKCIGIIFGGESNEHDVSVSSAKTVFKALISKTNINRFWVKAFYINKHGVWLDNDQSLVLLKEKRKNETIDKNQVFPKREINFLNTIEFQGIDIWFPLLHGVNGEDGAIHGLLKFTQKPIVGGGILGSALGMDKILMKKIFSHLEIPQVNYLDIQNQDLSDDKVKNNLSVEIIEKLKLPVFVKPANSGSSLGISKAKTRSEIIKALQKAWEIDSRIVIEEGLDVRELECGIIGNLKLTASEIGEVSYSTDWYDYDSKYSMDNQIIIPADIDSQISEQIKDIAIRSCRALNIYGFARVDFFLEKISNKIFLNEINTIPGFTSKSMFPMLWNASGLNIDQLVAKLVDISSDL</sequence>
<comment type="function">
    <text evidence="2">Cell wall formation.</text>
</comment>
<comment type="catalytic activity">
    <reaction evidence="2">
        <text>2 D-alanine + ATP = D-alanyl-D-alanine + ADP + phosphate + H(+)</text>
        <dbReference type="Rhea" id="RHEA:11224"/>
        <dbReference type="ChEBI" id="CHEBI:15378"/>
        <dbReference type="ChEBI" id="CHEBI:30616"/>
        <dbReference type="ChEBI" id="CHEBI:43474"/>
        <dbReference type="ChEBI" id="CHEBI:57416"/>
        <dbReference type="ChEBI" id="CHEBI:57822"/>
        <dbReference type="ChEBI" id="CHEBI:456216"/>
        <dbReference type="EC" id="6.3.2.4"/>
    </reaction>
</comment>
<comment type="cofactor">
    <cofactor evidence="1">
        <name>Mg(2+)</name>
        <dbReference type="ChEBI" id="CHEBI:18420"/>
    </cofactor>
    <cofactor evidence="1">
        <name>Mn(2+)</name>
        <dbReference type="ChEBI" id="CHEBI:29035"/>
    </cofactor>
    <text evidence="1">Binds 2 magnesium or manganese ions per subunit.</text>
</comment>
<comment type="pathway">
    <text evidence="2">Cell wall biogenesis; peptidoglycan biosynthesis.</text>
</comment>
<comment type="subcellular location">
    <subcellularLocation>
        <location evidence="2">Cytoplasm</location>
    </subcellularLocation>
</comment>
<comment type="similarity">
    <text evidence="2">Belongs to the D-alanine--D-alanine ligase family.</text>
</comment>
<dbReference type="EC" id="6.3.2.4" evidence="2"/>
<dbReference type="EMBL" id="BX548174">
    <property type="protein sequence ID" value="CAE19765.1"/>
    <property type="molecule type" value="Genomic_DNA"/>
</dbReference>
<dbReference type="RefSeq" id="WP_011132940.1">
    <property type="nucleotide sequence ID" value="NC_005072.1"/>
</dbReference>
<dbReference type="SMR" id="Q7V0F6"/>
<dbReference type="STRING" id="59919.PMM1306"/>
<dbReference type="KEGG" id="pmm:PMM1306"/>
<dbReference type="eggNOG" id="COG1181">
    <property type="taxonomic scope" value="Bacteria"/>
</dbReference>
<dbReference type="HOGENOM" id="CLU_039268_0_0_3"/>
<dbReference type="OrthoDB" id="9813261at2"/>
<dbReference type="UniPathway" id="UPA00219"/>
<dbReference type="Proteomes" id="UP000001026">
    <property type="component" value="Chromosome"/>
</dbReference>
<dbReference type="GO" id="GO:0005829">
    <property type="term" value="C:cytosol"/>
    <property type="evidence" value="ECO:0007669"/>
    <property type="project" value="TreeGrafter"/>
</dbReference>
<dbReference type="GO" id="GO:0005524">
    <property type="term" value="F:ATP binding"/>
    <property type="evidence" value="ECO:0007669"/>
    <property type="project" value="UniProtKB-KW"/>
</dbReference>
<dbReference type="GO" id="GO:0008716">
    <property type="term" value="F:D-alanine-D-alanine ligase activity"/>
    <property type="evidence" value="ECO:0007669"/>
    <property type="project" value="UniProtKB-UniRule"/>
</dbReference>
<dbReference type="GO" id="GO:0046872">
    <property type="term" value="F:metal ion binding"/>
    <property type="evidence" value="ECO:0007669"/>
    <property type="project" value="UniProtKB-KW"/>
</dbReference>
<dbReference type="GO" id="GO:0071555">
    <property type="term" value="P:cell wall organization"/>
    <property type="evidence" value="ECO:0007669"/>
    <property type="project" value="UniProtKB-KW"/>
</dbReference>
<dbReference type="GO" id="GO:0009252">
    <property type="term" value="P:peptidoglycan biosynthetic process"/>
    <property type="evidence" value="ECO:0007669"/>
    <property type="project" value="UniProtKB-UniRule"/>
</dbReference>
<dbReference type="GO" id="GO:0008360">
    <property type="term" value="P:regulation of cell shape"/>
    <property type="evidence" value="ECO:0007669"/>
    <property type="project" value="UniProtKB-KW"/>
</dbReference>
<dbReference type="Gene3D" id="3.40.50.20">
    <property type="match status" value="1"/>
</dbReference>
<dbReference type="Gene3D" id="3.30.1490.20">
    <property type="entry name" value="ATP-grasp fold, A domain"/>
    <property type="match status" value="1"/>
</dbReference>
<dbReference type="Gene3D" id="3.30.470.20">
    <property type="entry name" value="ATP-grasp fold, B domain"/>
    <property type="match status" value="1"/>
</dbReference>
<dbReference type="HAMAP" id="MF_00047">
    <property type="entry name" value="Dala_Dala_lig"/>
    <property type="match status" value="1"/>
</dbReference>
<dbReference type="InterPro" id="IPR011761">
    <property type="entry name" value="ATP-grasp"/>
</dbReference>
<dbReference type="InterPro" id="IPR013815">
    <property type="entry name" value="ATP_grasp_subdomain_1"/>
</dbReference>
<dbReference type="InterPro" id="IPR000291">
    <property type="entry name" value="D-Ala_lig_Van_CS"/>
</dbReference>
<dbReference type="InterPro" id="IPR005905">
    <property type="entry name" value="D_ala_D_ala"/>
</dbReference>
<dbReference type="InterPro" id="IPR011095">
    <property type="entry name" value="Dala_Dala_lig_C"/>
</dbReference>
<dbReference type="InterPro" id="IPR011127">
    <property type="entry name" value="Dala_Dala_lig_N"/>
</dbReference>
<dbReference type="InterPro" id="IPR016185">
    <property type="entry name" value="PreATP-grasp_dom_sf"/>
</dbReference>
<dbReference type="NCBIfam" id="TIGR01205">
    <property type="entry name" value="D_ala_D_alaTIGR"/>
    <property type="match status" value="1"/>
</dbReference>
<dbReference type="NCBIfam" id="NF002528">
    <property type="entry name" value="PRK01966.1-4"/>
    <property type="match status" value="1"/>
</dbReference>
<dbReference type="PANTHER" id="PTHR23132">
    <property type="entry name" value="D-ALANINE--D-ALANINE LIGASE"/>
    <property type="match status" value="1"/>
</dbReference>
<dbReference type="PANTHER" id="PTHR23132:SF25">
    <property type="entry name" value="D-ALANINE--D-ALANINE LIGASE A"/>
    <property type="match status" value="1"/>
</dbReference>
<dbReference type="Pfam" id="PF07478">
    <property type="entry name" value="Dala_Dala_lig_C"/>
    <property type="match status" value="1"/>
</dbReference>
<dbReference type="Pfam" id="PF01820">
    <property type="entry name" value="Dala_Dala_lig_N"/>
    <property type="match status" value="1"/>
</dbReference>
<dbReference type="PIRSF" id="PIRSF039102">
    <property type="entry name" value="Ddl/VanB"/>
    <property type="match status" value="1"/>
</dbReference>
<dbReference type="SUPFAM" id="SSF56059">
    <property type="entry name" value="Glutathione synthetase ATP-binding domain-like"/>
    <property type="match status" value="1"/>
</dbReference>
<dbReference type="SUPFAM" id="SSF52440">
    <property type="entry name" value="PreATP-grasp domain"/>
    <property type="match status" value="1"/>
</dbReference>
<dbReference type="PROSITE" id="PS50975">
    <property type="entry name" value="ATP_GRASP"/>
    <property type="match status" value="1"/>
</dbReference>
<dbReference type="PROSITE" id="PS00843">
    <property type="entry name" value="DALA_DALA_LIGASE_1"/>
    <property type="match status" value="1"/>
</dbReference>
<dbReference type="PROSITE" id="PS00844">
    <property type="entry name" value="DALA_DALA_LIGASE_2"/>
    <property type="match status" value="1"/>
</dbReference>
<protein>
    <recommendedName>
        <fullName evidence="2">D-alanine--D-alanine ligase</fullName>
        <ecNumber evidence="2">6.3.2.4</ecNumber>
    </recommendedName>
    <alternativeName>
        <fullName evidence="2">D-Ala-D-Ala ligase</fullName>
    </alternativeName>
    <alternativeName>
        <fullName evidence="2">D-alanylalanine synthetase</fullName>
    </alternativeName>
</protein>
<gene>
    <name evidence="2" type="primary">ddl</name>
    <name type="synonym">ddlA</name>
    <name type="ordered locus">PMM1306</name>
</gene>
<accession>Q7V0F6</accession>
<feature type="chain" id="PRO_0000177854" description="D-alanine--D-alanine ligase">
    <location>
        <begin position="1"/>
        <end position="355"/>
    </location>
</feature>
<feature type="domain" description="ATP-grasp" evidence="2">
    <location>
        <begin position="143"/>
        <end position="350"/>
    </location>
</feature>
<feature type="binding site" evidence="2">
    <location>
        <begin position="178"/>
        <end position="233"/>
    </location>
    <ligand>
        <name>ATP</name>
        <dbReference type="ChEBI" id="CHEBI:30616"/>
    </ligand>
</feature>
<feature type="binding site" evidence="2">
    <location>
        <position position="303"/>
    </location>
    <ligand>
        <name>Mg(2+)</name>
        <dbReference type="ChEBI" id="CHEBI:18420"/>
        <label>1</label>
    </ligand>
</feature>
<feature type="binding site" evidence="2">
    <location>
        <position position="317"/>
    </location>
    <ligand>
        <name>Mg(2+)</name>
        <dbReference type="ChEBI" id="CHEBI:18420"/>
        <label>1</label>
    </ligand>
</feature>
<feature type="binding site" evidence="2">
    <location>
        <position position="317"/>
    </location>
    <ligand>
        <name>Mg(2+)</name>
        <dbReference type="ChEBI" id="CHEBI:18420"/>
        <label>2</label>
    </ligand>
</feature>
<feature type="binding site" evidence="2">
    <location>
        <position position="319"/>
    </location>
    <ligand>
        <name>Mg(2+)</name>
        <dbReference type="ChEBI" id="CHEBI:18420"/>
        <label>2</label>
    </ligand>
</feature>
<evidence type="ECO:0000250" key="1"/>
<evidence type="ECO:0000255" key="2">
    <source>
        <dbReference type="HAMAP-Rule" id="MF_00047"/>
    </source>
</evidence>
<organism>
    <name type="scientific">Prochlorococcus marinus subsp. pastoris (strain CCMP1986 / NIES-2087 / MED4)</name>
    <dbReference type="NCBI Taxonomy" id="59919"/>
    <lineage>
        <taxon>Bacteria</taxon>
        <taxon>Bacillati</taxon>
        <taxon>Cyanobacteriota</taxon>
        <taxon>Cyanophyceae</taxon>
        <taxon>Synechococcales</taxon>
        <taxon>Prochlorococcaceae</taxon>
        <taxon>Prochlorococcus</taxon>
    </lineage>
</organism>
<proteinExistence type="inferred from homology"/>
<reference key="1">
    <citation type="journal article" date="2003" name="Nature">
        <title>Genome divergence in two Prochlorococcus ecotypes reflects oceanic niche differentiation.</title>
        <authorList>
            <person name="Rocap G."/>
            <person name="Larimer F.W."/>
            <person name="Lamerdin J.E."/>
            <person name="Malfatti S."/>
            <person name="Chain P."/>
            <person name="Ahlgren N.A."/>
            <person name="Arellano A."/>
            <person name="Coleman M."/>
            <person name="Hauser L."/>
            <person name="Hess W.R."/>
            <person name="Johnson Z.I."/>
            <person name="Land M.L."/>
            <person name="Lindell D."/>
            <person name="Post A.F."/>
            <person name="Regala W."/>
            <person name="Shah M."/>
            <person name="Shaw S.L."/>
            <person name="Steglich C."/>
            <person name="Sullivan M.B."/>
            <person name="Ting C.S."/>
            <person name="Tolonen A."/>
            <person name="Webb E.A."/>
            <person name="Zinser E.R."/>
            <person name="Chisholm S.W."/>
        </authorList>
    </citation>
    <scope>NUCLEOTIDE SEQUENCE [LARGE SCALE GENOMIC DNA]</scope>
    <source>
        <strain>CCMP1986 / NIES-2087 / MED4</strain>
    </source>
</reference>